<feature type="transit peptide" description="Mitochondrion" evidence="1">
    <location>
        <begin position="1"/>
        <end position="38"/>
    </location>
</feature>
<feature type="chain" id="PRO_0000388095" description="Ubiquinone biosynthesis protein coq4, mitochondrial">
    <location>
        <begin position="39"/>
        <end position="285"/>
    </location>
</feature>
<feature type="binding site" evidence="1">
    <location>
        <position position="167"/>
    </location>
    <ligand>
        <name>Zn(2+)</name>
        <dbReference type="ChEBI" id="CHEBI:29105"/>
    </ligand>
</feature>
<feature type="binding site" evidence="1">
    <location>
        <position position="168"/>
    </location>
    <ligand>
        <name>Zn(2+)</name>
        <dbReference type="ChEBI" id="CHEBI:29105"/>
    </ligand>
</feature>
<feature type="binding site" evidence="1">
    <location>
        <position position="171"/>
    </location>
    <ligand>
        <name>Zn(2+)</name>
        <dbReference type="ChEBI" id="CHEBI:29105"/>
    </ligand>
</feature>
<feature type="binding site" evidence="1">
    <location>
        <position position="183"/>
    </location>
    <ligand>
        <name>Zn(2+)</name>
        <dbReference type="ChEBI" id="CHEBI:29105"/>
    </ligand>
</feature>
<protein>
    <recommendedName>
        <fullName evidence="1">Ubiquinone biosynthesis protein coq4, mitochondrial</fullName>
    </recommendedName>
    <alternativeName>
        <fullName>4-hydroxy-3-methoxy-5-polyprenylbenzoate decarboxylase</fullName>
        <ecNumber evidence="1">4.1.1.130</ecNumber>
    </alternativeName>
    <alternativeName>
        <fullName evidence="1">Coenzyme Q biosynthesis protein 4</fullName>
    </alternativeName>
</protein>
<keyword id="KW-0456">Lyase</keyword>
<keyword id="KW-0472">Membrane</keyword>
<keyword id="KW-0479">Metal-binding</keyword>
<keyword id="KW-0496">Mitochondrion</keyword>
<keyword id="KW-0999">Mitochondrion inner membrane</keyword>
<keyword id="KW-0809">Transit peptide</keyword>
<keyword id="KW-0831">Ubiquinone biosynthesis</keyword>
<keyword id="KW-0862">Zinc</keyword>
<accession>B8NV05</accession>
<accession>B8NV06</accession>
<gene>
    <name type="primary">coq4</name>
    <name type="ORF">AFLA_102990/103000</name>
</gene>
<evidence type="ECO:0000255" key="1">
    <source>
        <dbReference type="HAMAP-Rule" id="MF_03111"/>
    </source>
</evidence>
<evidence type="ECO:0000305" key="2"/>
<organism>
    <name type="scientific">Aspergillus flavus (strain ATCC 200026 / FGSC A1120 / IAM 13836 / NRRL 3357 / JCM 12722 / SRRC 167)</name>
    <dbReference type="NCBI Taxonomy" id="332952"/>
    <lineage>
        <taxon>Eukaryota</taxon>
        <taxon>Fungi</taxon>
        <taxon>Dikarya</taxon>
        <taxon>Ascomycota</taxon>
        <taxon>Pezizomycotina</taxon>
        <taxon>Eurotiomycetes</taxon>
        <taxon>Eurotiomycetidae</taxon>
        <taxon>Eurotiales</taxon>
        <taxon>Aspergillaceae</taxon>
        <taxon>Aspergillus</taxon>
        <taxon>Aspergillus subgen. Circumdati</taxon>
    </lineage>
</organism>
<sequence>MSVLRRRGALSLRELSLSTPVTVVSCRARSFSVNNRPPPKYPGHVPLNFVERGALAVGSAVGALLNPRRADLIAACGEATATPYFIYRLRDAMLSDPTGRQILRERPRITSETLPLPYLRSLPENSVGRTYAAWLDREGVSPDTRDNVQYIDDEECAYVMQRYRECHDFYHAVTGLPTFVEGEIALKAFEFLNTLIPMTGLSMFAAVRLKPAERERFFALWLPWAVRSGLASKELINVYWEKILEKDVDELRGELGIEKPPDMREIRRMIREQKKREKERLQQSA</sequence>
<dbReference type="EC" id="4.1.1.130" evidence="1"/>
<dbReference type="EMBL" id="EQ963484">
    <property type="protein sequence ID" value="EED46634.1"/>
    <property type="status" value="ALT_SEQ"/>
    <property type="molecule type" value="Genomic_DNA"/>
</dbReference>
<dbReference type="EMBL" id="EQ963484">
    <property type="protein sequence ID" value="EED46635.1"/>
    <property type="status" value="ALT_SEQ"/>
    <property type="molecule type" value="Genomic_DNA"/>
</dbReference>
<dbReference type="RefSeq" id="XP_002384170.1">
    <property type="nucleotide sequence ID" value="XM_002384129.1"/>
</dbReference>
<dbReference type="RefSeq" id="XP_002384171.1">
    <property type="nucleotide sequence ID" value="XM_002384130.1"/>
</dbReference>
<dbReference type="SMR" id="B8NV05"/>
<dbReference type="STRING" id="332952.B8NV05"/>
<dbReference type="EnsemblFungi" id="EED46635">
    <property type="protein sequence ID" value="EED46635"/>
    <property type="gene ID" value="AFLA_103000"/>
</dbReference>
<dbReference type="VEuPathDB" id="FungiDB:AFLA_010548"/>
<dbReference type="eggNOG" id="KOG3244">
    <property type="taxonomic scope" value="Eukaryota"/>
</dbReference>
<dbReference type="UniPathway" id="UPA00232"/>
<dbReference type="GO" id="GO:0031314">
    <property type="term" value="C:extrinsic component of mitochondrial inner membrane"/>
    <property type="evidence" value="ECO:0007669"/>
    <property type="project" value="UniProtKB-UniRule"/>
</dbReference>
<dbReference type="GO" id="GO:0006744">
    <property type="term" value="P:ubiquinone biosynthetic process"/>
    <property type="evidence" value="ECO:0007669"/>
    <property type="project" value="UniProtKB-UniRule"/>
</dbReference>
<dbReference type="HAMAP" id="MF_03111">
    <property type="entry name" value="Coq4"/>
    <property type="match status" value="1"/>
</dbReference>
<dbReference type="InterPro" id="IPR007715">
    <property type="entry name" value="Coq4"/>
</dbReference>
<dbReference type="InterPro" id="IPR027540">
    <property type="entry name" value="Coq4_euk"/>
</dbReference>
<dbReference type="PANTHER" id="PTHR12922">
    <property type="entry name" value="UBIQUINONE BIOSYNTHESIS PROTEIN"/>
    <property type="match status" value="1"/>
</dbReference>
<dbReference type="PANTHER" id="PTHR12922:SF7">
    <property type="entry name" value="UBIQUINONE BIOSYNTHESIS PROTEIN COQ4 HOMOLOG, MITOCHONDRIAL"/>
    <property type="match status" value="1"/>
</dbReference>
<dbReference type="Pfam" id="PF05019">
    <property type="entry name" value="Coq4"/>
    <property type="match status" value="1"/>
</dbReference>
<comment type="function">
    <text evidence="1">Lyase that catalyzes the C1-decarboxylation of 4-hydroxy-3-methoxy-5-(all-trans-polyprenyl)benzoic acid into 2-methoxy-6-(all-trans-polyprenyl)phenol during ubiquinone biosynthesis.</text>
</comment>
<comment type="catalytic activity">
    <reaction evidence="1">
        <text>a 4-hydroxy-3-methoxy-5-(all-trans-polyprenyl)benzoate + H(+) = a 2-methoxy-6-(all-trans-polyprenyl)phenol + CO2</text>
        <dbReference type="Rhea" id="RHEA:81179"/>
        <dbReference type="Rhea" id="RHEA-COMP:9551"/>
        <dbReference type="Rhea" id="RHEA-COMP:10931"/>
        <dbReference type="ChEBI" id="CHEBI:15378"/>
        <dbReference type="ChEBI" id="CHEBI:16526"/>
        <dbReference type="ChEBI" id="CHEBI:62731"/>
        <dbReference type="ChEBI" id="CHEBI:84443"/>
        <dbReference type="EC" id="4.1.1.130"/>
    </reaction>
</comment>
<comment type="cofactor">
    <cofactor evidence="1">
        <name>Zn(2+)</name>
        <dbReference type="ChEBI" id="CHEBI:29105"/>
    </cofactor>
</comment>
<comment type="pathway">
    <text evidence="1">Cofactor biosynthesis; ubiquinone biosynthesis.</text>
</comment>
<comment type="subunit">
    <text evidence="1">Component of a multi-subunit COQ enzyme complex, composed of at least coq3, coq4, coq5, coq6, coq7 and coq9.</text>
</comment>
<comment type="subcellular location">
    <subcellularLocation>
        <location evidence="1">Mitochondrion inner membrane</location>
        <topology evidence="1">Peripheral membrane protein</topology>
        <orientation evidence="1">Matrix side</orientation>
    </subcellularLocation>
</comment>
<comment type="similarity">
    <text evidence="1">Belongs to the COQ4 family.</text>
</comment>
<comment type="sequence caution" evidence="2">
    <conflict type="erroneous gene model prediction">
        <sequence resource="EMBL-CDS" id="EED46634"/>
    </conflict>
</comment>
<comment type="sequence caution" evidence="2">
    <conflict type="frameshift">
        <sequence resource="EMBL-CDS" id="EED46634"/>
    </conflict>
</comment>
<comment type="sequence caution" evidence="2">
    <conflict type="erroneous gene model prediction">
        <sequence resource="EMBL-CDS" id="EED46635"/>
    </conflict>
</comment>
<reference key="1">
    <citation type="journal article" date="2015" name="Genome Announc.">
        <title>Genome sequence of Aspergillus flavus NRRL 3357, a strain that causes aflatoxin contamination of food and feed.</title>
        <authorList>
            <person name="Nierman W.C."/>
            <person name="Yu J."/>
            <person name="Fedorova-Abrams N.D."/>
            <person name="Losada L."/>
            <person name="Cleveland T.E."/>
            <person name="Bhatnagar D."/>
            <person name="Bennett J.W."/>
            <person name="Dean R."/>
            <person name="Payne G.A."/>
        </authorList>
    </citation>
    <scope>NUCLEOTIDE SEQUENCE [LARGE SCALE GENOMIC DNA]</scope>
    <source>
        <strain>ATCC 200026 / FGSC A1120 / IAM 13836 / NRRL 3357 / JCM 12722 / SRRC 167</strain>
    </source>
</reference>
<name>COQ4_ASPFN</name>
<proteinExistence type="inferred from homology"/>